<feature type="chain" id="PRO_0000180887" description="Flagellar M-ring protein">
    <location>
        <begin position="1"/>
        <end position="567"/>
    </location>
</feature>
<feature type="transmembrane region" description="Helical" evidence="2">
    <location>
        <begin position="26"/>
        <end position="46"/>
    </location>
</feature>
<feature type="transmembrane region" description="Helical" evidence="2">
    <location>
        <begin position="469"/>
        <end position="489"/>
    </location>
</feature>
<feature type="region of interest" description="Disordered" evidence="3">
    <location>
        <begin position="320"/>
        <end position="339"/>
    </location>
</feature>
<protein>
    <recommendedName>
        <fullName>Flagellar M-ring protein</fullName>
    </recommendedName>
</protein>
<proteinExistence type="inferred from homology"/>
<comment type="function">
    <text evidence="1">The M ring may be actively involved in energy transduction.</text>
</comment>
<comment type="subunit">
    <text evidence="1">The basal body constitutes a major portion of the flagellar organelle and consists of five rings (E,L,P,S, and M) mounted on a central rod. The M ring is integral to the inner membrane of the cell and may be connected to the flagellar rod via the S ring. The S (supramembrane ring) lies just distal to the M ring. The L and P rings lie in the outer membrane and the periplasmic space, respectively (By similarity).</text>
</comment>
<comment type="subcellular location">
    <subcellularLocation>
        <location evidence="1">Cell inner membrane</location>
        <topology evidence="1">Multi-pass membrane protein</topology>
    </subcellularLocation>
    <subcellularLocation>
        <location evidence="1">Bacterial flagellum basal body</location>
    </subcellularLocation>
</comment>
<comment type="similarity">
    <text evidence="4">Belongs to the FliF family.</text>
</comment>
<keyword id="KW-0975">Bacterial flagellum</keyword>
<keyword id="KW-0997">Cell inner membrane</keyword>
<keyword id="KW-1003">Cell membrane</keyword>
<keyword id="KW-0472">Membrane</keyword>
<keyword id="KW-1185">Reference proteome</keyword>
<keyword id="KW-0812">Transmembrane</keyword>
<keyword id="KW-1133">Transmembrane helix</keyword>
<gene>
    <name type="primary">fliF</name>
    <name type="ordered locus">TP_0399</name>
</gene>
<organism>
    <name type="scientific">Treponema pallidum (strain Nichols)</name>
    <dbReference type="NCBI Taxonomy" id="243276"/>
    <lineage>
        <taxon>Bacteria</taxon>
        <taxon>Pseudomonadati</taxon>
        <taxon>Spirochaetota</taxon>
        <taxon>Spirochaetia</taxon>
        <taxon>Spirochaetales</taxon>
        <taxon>Treponemataceae</taxon>
        <taxon>Treponema</taxon>
    </lineage>
</organism>
<reference key="1">
    <citation type="journal article" date="1998" name="Science">
        <title>Complete genome sequence of Treponema pallidum, the syphilis spirochete.</title>
        <authorList>
            <person name="Fraser C.M."/>
            <person name="Norris S.J."/>
            <person name="Weinstock G.M."/>
            <person name="White O."/>
            <person name="Sutton G.G."/>
            <person name="Dodson R.J."/>
            <person name="Gwinn M.L."/>
            <person name="Hickey E.K."/>
            <person name="Clayton R.A."/>
            <person name="Ketchum K.A."/>
            <person name="Sodergren E."/>
            <person name="Hardham J.M."/>
            <person name="McLeod M.P."/>
            <person name="Salzberg S.L."/>
            <person name="Peterson J.D."/>
            <person name="Khalak H.G."/>
            <person name="Richardson D.L."/>
            <person name="Howell J.K."/>
            <person name="Chidambaram M."/>
            <person name="Utterback T.R."/>
            <person name="McDonald L.A."/>
            <person name="Artiach P."/>
            <person name="Bowman C."/>
            <person name="Cotton M.D."/>
            <person name="Fujii C."/>
            <person name="Garland S.A."/>
            <person name="Hatch B."/>
            <person name="Horst K."/>
            <person name="Roberts K.M."/>
            <person name="Sandusky M."/>
            <person name="Weidman J.F."/>
            <person name="Smith H.O."/>
            <person name="Venter J.C."/>
        </authorList>
    </citation>
    <scope>NUCLEOTIDE SEQUENCE [LARGE SCALE GENOMIC DNA]</scope>
    <source>
        <strain>Nichols</strain>
    </source>
</reference>
<dbReference type="EMBL" id="AE000520">
    <property type="protein sequence ID" value="AAC65387.1"/>
    <property type="molecule type" value="Genomic_DNA"/>
</dbReference>
<dbReference type="PIR" id="F71328">
    <property type="entry name" value="F71328"/>
</dbReference>
<dbReference type="RefSeq" id="WP_010881847.1">
    <property type="nucleotide sequence ID" value="NC_021490.2"/>
</dbReference>
<dbReference type="SMR" id="O83414"/>
<dbReference type="IntAct" id="O83414">
    <property type="interactions" value="6"/>
</dbReference>
<dbReference type="STRING" id="243276.TP_0399"/>
<dbReference type="EnsemblBacteria" id="AAC65387">
    <property type="protein sequence ID" value="AAC65387"/>
    <property type="gene ID" value="TP_0399"/>
</dbReference>
<dbReference type="GeneID" id="93876173"/>
<dbReference type="KEGG" id="tpa:TP_0399"/>
<dbReference type="KEGG" id="tpw:TPANIC_0399"/>
<dbReference type="eggNOG" id="COG1766">
    <property type="taxonomic scope" value="Bacteria"/>
</dbReference>
<dbReference type="HOGENOM" id="CLU_028108_2_0_12"/>
<dbReference type="OrthoDB" id="304821at2"/>
<dbReference type="Proteomes" id="UP000000811">
    <property type="component" value="Chromosome"/>
</dbReference>
<dbReference type="GO" id="GO:0009431">
    <property type="term" value="C:bacterial-type flagellum basal body, MS ring"/>
    <property type="evidence" value="ECO:0007669"/>
    <property type="project" value="InterPro"/>
</dbReference>
<dbReference type="GO" id="GO:0005886">
    <property type="term" value="C:plasma membrane"/>
    <property type="evidence" value="ECO:0007669"/>
    <property type="project" value="UniProtKB-SubCell"/>
</dbReference>
<dbReference type="GO" id="GO:0003774">
    <property type="term" value="F:cytoskeletal motor activity"/>
    <property type="evidence" value="ECO:0007669"/>
    <property type="project" value="InterPro"/>
</dbReference>
<dbReference type="GO" id="GO:0071973">
    <property type="term" value="P:bacterial-type flagellum-dependent cell motility"/>
    <property type="evidence" value="ECO:0007669"/>
    <property type="project" value="InterPro"/>
</dbReference>
<dbReference type="Gene3D" id="3.30.300.30">
    <property type="match status" value="1"/>
</dbReference>
<dbReference type="InterPro" id="IPR045851">
    <property type="entry name" value="AMP-bd_C_sf"/>
</dbReference>
<dbReference type="InterPro" id="IPR013556">
    <property type="entry name" value="Flag_M-ring_C"/>
</dbReference>
<dbReference type="InterPro" id="IPR000067">
    <property type="entry name" value="FlgMring_FliF"/>
</dbReference>
<dbReference type="InterPro" id="IPR006182">
    <property type="entry name" value="FliF_N_dom"/>
</dbReference>
<dbReference type="InterPro" id="IPR043427">
    <property type="entry name" value="YscJ/FliF"/>
</dbReference>
<dbReference type="NCBIfam" id="TIGR00206">
    <property type="entry name" value="fliF"/>
    <property type="match status" value="1"/>
</dbReference>
<dbReference type="PANTHER" id="PTHR30046">
    <property type="entry name" value="FLAGELLAR M-RING PROTEIN"/>
    <property type="match status" value="1"/>
</dbReference>
<dbReference type="PANTHER" id="PTHR30046:SF0">
    <property type="entry name" value="FLAGELLAR M-RING PROTEIN"/>
    <property type="match status" value="1"/>
</dbReference>
<dbReference type="Pfam" id="PF01514">
    <property type="entry name" value="YscJ_FliF"/>
    <property type="match status" value="1"/>
</dbReference>
<dbReference type="Pfam" id="PF08345">
    <property type="entry name" value="YscJ_FliF_C"/>
    <property type="match status" value="1"/>
</dbReference>
<dbReference type="PRINTS" id="PR01009">
    <property type="entry name" value="FLGMRINGFLIF"/>
</dbReference>
<accession>O83414</accession>
<name>FLIF_TREPA</name>
<sequence>MGEWLGQLGVKLKTQWKKWTLVQKSVLAGAALVSVMGVVVLLTWSAKPTLVPLIDTPITDETVREKIILRLNEENVRATVSSVGLISVSDEKTARRMRSILIREDLIPKNVDPWAIFDVERWTRTDFERRVDVRRAINNTVTNHIKALDDIDDAHVVINVPEDALFQADQKPITASVVIFPKPSSTIASERKKIEGIQKLLKLAVPGLKDENITIVDSDATVLNDFEGFKDADRLSLIEKQQKMIAKLESQYEAKVLALLQKTYGKDRVRDLNIKIEMDLSEKTSQTTKYLPIEIRQDNPDTPWDDSQVVPSVTSISETATTTWQGTGLNPEGPPGVEGQTPPAYKDMSNQVGLSNQSVVKKQEAISKSEINEVVSPVLGRRTVSVNIDGEWRKKRDEHGRFIVKEGHIEREYIPISAEELREATKAVQDAIGFDAGRKDSVSVLNIKFDRTSEFDREDEHYLRVQQRNMIILYSLASVAIVLFIFMVYKVISKEVERRRRLREEELLRQQQLMRERALWEAEQAGMNVSMSVEERKRLELQENVLNMAREHPEDVALLVRTWLMEE</sequence>
<evidence type="ECO:0000250" key="1"/>
<evidence type="ECO:0000255" key="2"/>
<evidence type="ECO:0000256" key="3">
    <source>
        <dbReference type="SAM" id="MobiDB-lite"/>
    </source>
</evidence>
<evidence type="ECO:0000305" key="4"/>